<reference key="1">
    <citation type="submission" date="2008-12" db="EMBL/GenBank/DDBJ databases">
        <title>Complete sequence of Chloroflexus aggregans DSM 9485.</title>
        <authorList>
            <consortium name="US DOE Joint Genome Institute"/>
            <person name="Lucas S."/>
            <person name="Copeland A."/>
            <person name="Lapidus A."/>
            <person name="Glavina del Rio T."/>
            <person name="Dalin E."/>
            <person name="Tice H."/>
            <person name="Pitluck S."/>
            <person name="Foster B."/>
            <person name="Larimer F."/>
            <person name="Land M."/>
            <person name="Hauser L."/>
            <person name="Kyrpides N."/>
            <person name="Mikhailova N."/>
            <person name="Bryant D.A."/>
            <person name="Richardson P."/>
        </authorList>
    </citation>
    <scope>NUCLEOTIDE SEQUENCE [LARGE SCALE GENOMIC DNA]</scope>
    <source>
        <strain>MD-66 / DSM 9485</strain>
    </source>
</reference>
<dbReference type="EC" id="5.4.99.62" evidence="1"/>
<dbReference type="EMBL" id="CP001337">
    <property type="protein sequence ID" value="ACL25768.1"/>
    <property type="molecule type" value="Genomic_DNA"/>
</dbReference>
<dbReference type="RefSeq" id="WP_015941624.1">
    <property type="nucleotide sequence ID" value="NC_011831.1"/>
</dbReference>
<dbReference type="SMR" id="B8G635"/>
<dbReference type="STRING" id="326427.Cagg_2908"/>
<dbReference type="KEGG" id="cag:Cagg_2908"/>
<dbReference type="eggNOG" id="COG1869">
    <property type="taxonomic scope" value="Bacteria"/>
</dbReference>
<dbReference type="HOGENOM" id="CLU_135498_0_0_0"/>
<dbReference type="OrthoDB" id="9805009at2"/>
<dbReference type="UniPathway" id="UPA00916">
    <property type="reaction ID" value="UER00888"/>
</dbReference>
<dbReference type="Proteomes" id="UP000002508">
    <property type="component" value="Chromosome"/>
</dbReference>
<dbReference type="GO" id="GO:0005829">
    <property type="term" value="C:cytosol"/>
    <property type="evidence" value="ECO:0007669"/>
    <property type="project" value="TreeGrafter"/>
</dbReference>
<dbReference type="GO" id="GO:0062193">
    <property type="term" value="F:D-ribose pyranase activity"/>
    <property type="evidence" value="ECO:0007669"/>
    <property type="project" value="UniProtKB-EC"/>
</dbReference>
<dbReference type="GO" id="GO:0016872">
    <property type="term" value="F:intramolecular lyase activity"/>
    <property type="evidence" value="ECO:0007669"/>
    <property type="project" value="UniProtKB-UniRule"/>
</dbReference>
<dbReference type="GO" id="GO:0048029">
    <property type="term" value="F:monosaccharide binding"/>
    <property type="evidence" value="ECO:0007669"/>
    <property type="project" value="InterPro"/>
</dbReference>
<dbReference type="GO" id="GO:0019303">
    <property type="term" value="P:D-ribose catabolic process"/>
    <property type="evidence" value="ECO:0007669"/>
    <property type="project" value="UniProtKB-UniRule"/>
</dbReference>
<dbReference type="Gene3D" id="3.40.1650.10">
    <property type="entry name" value="RbsD-like domain"/>
    <property type="match status" value="1"/>
</dbReference>
<dbReference type="HAMAP" id="MF_01661">
    <property type="entry name" value="D_rib_pyranase"/>
    <property type="match status" value="1"/>
</dbReference>
<dbReference type="InterPro" id="IPR023064">
    <property type="entry name" value="D-ribose_pyranase"/>
</dbReference>
<dbReference type="InterPro" id="IPR023750">
    <property type="entry name" value="RbsD-like_sf"/>
</dbReference>
<dbReference type="InterPro" id="IPR007721">
    <property type="entry name" value="RbsD_FucU"/>
</dbReference>
<dbReference type="NCBIfam" id="NF008761">
    <property type="entry name" value="PRK11797.1"/>
    <property type="match status" value="1"/>
</dbReference>
<dbReference type="PANTHER" id="PTHR37831">
    <property type="entry name" value="D-RIBOSE PYRANASE"/>
    <property type="match status" value="1"/>
</dbReference>
<dbReference type="PANTHER" id="PTHR37831:SF1">
    <property type="entry name" value="D-RIBOSE PYRANASE"/>
    <property type="match status" value="1"/>
</dbReference>
<dbReference type="Pfam" id="PF05025">
    <property type="entry name" value="RbsD_FucU"/>
    <property type="match status" value="1"/>
</dbReference>
<dbReference type="SUPFAM" id="SSF102546">
    <property type="entry name" value="RbsD-like"/>
    <property type="match status" value="1"/>
</dbReference>
<proteinExistence type="inferred from homology"/>
<accession>B8G635</accession>
<protein>
    <recommendedName>
        <fullName evidence="1">D-ribose pyranase</fullName>
        <ecNumber evidence="1">5.4.99.62</ecNumber>
    </recommendedName>
</protein>
<comment type="function">
    <text evidence="1">Catalyzes the interconversion of beta-pyran and beta-furan forms of D-ribose.</text>
</comment>
<comment type="catalytic activity">
    <reaction evidence="1">
        <text>beta-D-ribopyranose = beta-D-ribofuranose</text>
        <dbReference type="Rhea" id="RHEA:25432"/>
        <dbReference type="ChEBI" id="CHEBI:27476"/>
        <dbReference type="ChEBI" id="CHEBI:47002"/>
        <dbReference type="EC" id="5.4.99.62"/>
    </reaction>
</comment>
<comment type="pathway">
    <text evidence="1">Carbohydrate metabolism; D-ribose degradation; D-ribose 5-phosphate from beta-D-ribopyranose: step 1/2.</text>
</comment>
<comment type="subunit">
    <text evidence="1">Homodecamer.</text>
</comment>
<comment type="subcellular location">
    <subcellularLocation>
        <location evidence="1">Cytoplasm</location>
    </subcellularLocation>
</comment>
<comment type="similarity">
    <text evidence="1">Belongs to the RbsD / FucU family. RbsD subfamily.</text>
</comment>
<keyword id="KW-0119">Carbohydrate metabolism</keyword>
<keyword id="KW-0963">Cytoplasm</keyword>
<keyword id="KW-0413">Isomerase</keyword>
<gene>
    <name evidence="1" type="primary">rbsD</name>
    <name type="ordered locus">Cagg_2908</name>
</gene>
<evidence type="ECO:0000255" key="1">
    <source>
        <dbReference type="HAMAP-Rule" id="MF_01661"/>
    </source>
</evidence>
<feature type="chain" id="PRO_1000187136" description="D-ribose pyranase">
    <location>
        <begin position="1"/>
        <end position="131"/>
    </location>
</feature>
<feature type="active site" description="Proton donor" evidence="1">
    <location>
        <position position="20"/>
    </location>
</feature>
<feature type="binding site" evidence="1">
    <location>
        <position position="28"/>
    </location>
    <ligand>
        <name>substrate</name>
    </ligand>
</feature>
<feature type="binding site" evidence="1">
    <location>
        <position position="98"/>
    </location>
    <ligand>
        <name>substrate</name>
    </ligand>
</feature>
<feature type="binding site" evidence="1">
    <location>
        <begin position="120"/>
        <end position="122"/>
    </location>
    <ligand>
        <name>substrate</name>
    </ligand>
</feature>
<name>RBSD_CHLAD</name>
<organism>
    <name type="scientific">Chloroflexus aggregans (strain MD-66 / DSM 9485)</name>
    <dbReference type="NCBI Taxonomy" id="326427"/>
    <lineage>
        <taxon>Bacteria</taxon>
        <taxon>Bacillati</taxon>
        <taxon>Chloroflexota</taxon>
        <taxon>Chloroflexia</taxon>
        <taxon>Chloroflexales</taxon>
        <taxon>Chloroflexineae</taxon>
        <taxon>Chloroflexaceae</taxon>
        <taxon>Chloroflexus</taxon>
    </lineage>
</organism>
<sequence length="131" mass="14205">MKKTLLLNSVLSELIASLGHGDMVVIGDAGLPIPPETRRIDLALCRGIPPLLETVRVIASEMQVEKALIATETGQRSPHIRDGLGQLLPNTPFEEVSHEQLKALCRQARAVVRTGEYTPYANVILVAGVVF</sequence>